<dbReference type="EMBL" id="CR382125">
    <property type="protein sequence ID" value="CAG99731.1"/>
    <property type="molecule type" value="Genomic_DNA"/>
</dbReference>
<dbReference type="RefSeq" id="XP_454644.1">
    <property type="nucleotide sequence ID" value="XM_454644.1"/>
</dbReference>
<dbReference type="SMR" id="Q6CN45"/>
<dbReference type="FunCoup" id="Q6CN45">
    <property type="interactions" value="46"/>
</dbReference>
<dbReference type="PaxDb" id="284590-Q6CN45"/>
<dbReference type="KEGG" id="kla:KLLA0_E15379g"/>
<dbReference type="eggNOG" id="ENOG502RY27">
    <property type="taxonomic scope" value="Eukaryota"/>
</dbReference>
<dbReference type="HOGENOM" id="CLU_057910_0_0_1"/>
<dbReference type="InParanoid" id="Q6CN45"/>
<dbReference type="OMA" id="KVSWQIS"/>
<dbReference type="Proteomes" id="UP000000598">
    <property type="component" value="Chromosome E"/>
</dbReference>
<dbReference type="GO" id="GO:0005739">
    <property type="term" value="C:mitochondrion"/>
    <property type="evidence" value="ECO:0007669"/>
    <property type="project" value="UniProtKB-SubCell"/>
</dbReference>
<dbReference type="InterPro" id="IPR029427">
    <property type="entry name" value="AIM23"/>
</dbReference>
<dbReference type="Pfam" id="PF14877">
    <property type="entry name" value="mIF3"/>
    <property type="match status" value="1"/>
</dbReference>
<feature type="transit peptide" description="Mitochondrion" evidence="2">
    <location>
        <begin position="1"/>
        <end status="unknown"/>
    </location>
</feature>
<feature type="chain" id="PRO_0000399536" description="Altered inheritance of mitochondria protein 23, mitochondrial">
    <location>
        <begin status="unknown"/>
        <end position="347"/>
    </location>
</feature>
<feature type="region of interest" description="Disordered" evidence="3">
    <location>
        <begin position="47"/>
        <end position="78"/>
    </location>
</feature>
<feature type="region of interest" description="Disordered" evidence="3">
    <location>
        <begin position="317"/>
        <end position="347"/>
    </location>
</feature>
<feature type="compositionally biased region" description="Basic residues" evidence="3">
    <location>
        <begin position="50"/>
        <end position="70"/>
    </location>
</feature>
<name>AIM23_KLULA</name>
<reference key="1">
    <citation type="journal article" date="2004" name="Nature">
        <title>Genome evolution in yeasts.</title>
        <authorList>
            <person name="Dujon B."/>
            <person name="Sherman D."/>
            <person name="Fischer G."/>
            <person name="Durrens P."/>
            <person name="Casaregola S."/>
            <person name="Lafontaine I."/>
            <person name="de Montigny J."/>
            <person name="Marck C."/>
            <person name="Neuveglise C."/>
            <person name="Talla E."/>
            <person name="Goffard N."/>
            <person name="Frangeul L."/>
            <person name="Aigle M."/>
            <person name="Anthouard V."/>
            <person name="Babour A."/>
            <person name="Barbe V."/>
            <person name="Barnay S."/>
            <person name="Blanchin S."/>
            <person name="Beckerich J.-M."/>
            <person name="Beyne E."/>
            <person name="Bleykasten C."/>
            <person name="Boisrame A."/>
            <person name="Boyer J."/>
            <person name="Cattolico L."/>
            <person name="Confanioleri F."/>
            <person name="de Daruvar A."/>
            <person name="Despons L."/>
            <person name="Fabre E."/>
            <person name="Fairhead C."/>
            <person name="Ferry-Dumazet H."/>
            <person name="Groppi A."/>
            <person name="Hantraye F."/>
            <person name="Hennequin C."/>
            <person name="Jauniaux N."/>
            <person name="Joyet P."/>
            <person name="Kachouri R."/>
            <person name="Kerrest A."/>
            <person name="Koszul R."/>
            <person name="Lemaire M."/>
            <person name="Lesur I."/>
            <person name="Ma L."/>
            <person name="Muller H."/>
            <person name="Nicaud J.-M."/>
            <person name="Nikolski M."/>
            <person name="Oztas S."/>
            <person name="Ozier-Kalogeropoulos O."/>
            <person name="Pellenz S."/>
            <person name="Potier S."/>
            <person name="Richard G.-F."/>
            <person name="Straub M.-L."/>
            <person name="Suleau A."/>
            <person name="Swennen D."/>
            <person name="Tekaia F."/>
            <person name="Wesolowski-Louvel M."/>
            <person name="Westhof E."/>
            <person name="Wirth B."/>
            <person name="Zeniou-Meyer M."/>
            <person name="Zivanovic Y."/>
            <person name="Bolotin-Fukuhara M."/>
            <person name="Thierry A."/>
            <person name="Bouchier C."/>
            <person name="Caudron B."/>
            <person name="Scarpelli C."/>
            <person name="Gaillardin C."/>
            <person name="Weissenbach J."/>
            <person name="Wincker P."/>
            <person name="Souciet J.-L."/>
        </authorList>
    </citation>
    <scope>NUCLEOTIDE SEQUENCE [LARGE SCALE GENOMIC DNA]</scope>
    <source>
        <strain>ATCC 8585 / CBS 2359 / DSM 70799 / NBRC 1267 / NRRL Y-1140 / WM37</strain>
    </source>
</reference>
<sequence length="347" mass="39868">MKYHYIQMLRTTFKYSISSIRLFCNNRVLQNESRAVSDLLFNLPTYNPATHRKSGNNSPHKNRDKHRHRNGNKDQRNKKLVFRWNSGTEKQQAAANSVLEEILAINSKGNIKAINPETSKLEEANIRNFLKGVNLEINGIAMVSIDNAASGDVRLPIVKEVPTRQALKNYSDKLSKIKEEELIKLGVNIKKTGRRSPDSKADSSWKSIKVSWQISDYDLKKQKCSEIVSNLEKGSKIALFINDKDSSNLSPIDEEELEAMQESSISKKEMKRREEVLEKLNEIISEYSSQITQEGLINQRIIMKVTPNLVNTNNGVDKKALKEQRKRERQEKLQRRIEKKKTSDSTE</sequence>
<keyword id="KW-0496">Mitochondrion</keyword>
<keyword id="KW-1185">Reference proteome</keyword>
<keyword id="KW-0809">Transit peptide</keyword>
<protein>
    <recommendedName>
        <fullName>Altered inheritance of mitochondria protein 23, mitochondrial</fullName>
    </recommendedName>
</protein>
<organism>
    <name type="scientific">Kluyveromyces lactis (strain ATCC 8585 / CBS 2359 / DSM 70799 / NBRC 1267 / NRRL Y-1140 / WM37)</name>
    <name type="common">Yeast</name>
    <name type="synonym">Candida sphaerica</name>
    <dbReference type="NCBI Taxonomy" id="284590"/>
    <lineage>
        <taxon>Eukaryota</taxon>
        <taxon>Fungi</taxon>
        <taxon>Dikarya</taxon>
        <taxon>Ascomycota</taxon>
        <taxon>Saccharomycotina</taxon>
        <taxon>Saccharomycetes</taxon>
        <taxon>Saccharomycetales</taxon>
        <taxon>Saccharomycetaceae</taxon>
        <taxon>Kluyveromyces</taxon>
    </lineage>
</organism>
<evidence type="ECO:0000250" key="1"/>
<evidence type="ECO:0000255" key="2"/>
<evidence type="ECO:0000256" key="3">
    <source>
        <dbReference type="SAM" id="MobiDB-lite"/>
    </source>
</evidence>
<evidence type="ECO:0000305" key="4"/>
<accession>Q6CN45</accession>
<comment type="subcellular location">
    <subcellularLocation>
        <location evidence="1">Mitochondrion</location>
    </subcellularLocation>
</comment>
<comment type="similarity">
    <text evidence="4">Belongs to the AIM23 family.</text>
</comment>
<proteinExistence type="inferred from homology"/>
<gene>
    <name type="primary">AIM23</name>
    <name type="ordered locus">KLLA0E15379g</name>
</gene>